<proteinExistence type="inferred from homology"/>
<dbReference type="EC" id="2.3.3.13" evidence="1"/>
<dbReference type="EMBL" id="AF041836">
    <property type="protein sequence ID" value="AAD12593.1"/>
    <property type="molecule type" value="Genomic_DNA"/>
</dbReference>
<dbReference type="EMBL" id="AJ006876">
    <property type="protein sequence ID" value="CAA07296.1"/>
    <property type="molecule type" value="Genomic_DNA"/>
</dbReference>
<dbReference type="RefSeq" id="NP_047180.1">
    <property type="nucleotide sequence ID" value="NC_001910.1"/>
</dbReference>
<dbReference type="SMR" id="O85063"/>
<dbReference type="UniPathway" id="UPA00048">
    <property type="reaction ID" value="UER00070"/>
</dbReference>
<dbReference type="Proteomes" id="UP000000416">
    <property type="component" value="Plasmid pLeu-Sg"/>
</dbReference>
<dbReference type="GO" id="GO:0005829">
    <property type="term" value="C:cytosol"/>
    <property type="evidence" value="ECO:0007669"/>
    <property type="project" value="TreeGrafter"/>
</dbReference>
<dbReference type="GO" id="GO:0003852">
    <property type="term" value="F:2-isopropylmalate synthase activity"/>
    <property type="evidence" value="ECO:0007669"/>
    <property type="project" value="UniProtKB-UniRule"/>
</dbReference>
<dbReference type="GO" id="GO:0003985">
    <property type="term" value="F:acetyl-CoA C-acetyltransferase activity"/>
    <property type="evidence" value="ECO:0007669"/>
    <property type="project" value="UniProtKB-UniRule"/>
</dbReference>
<dbReference type="GO" id="GO:0030145">
    <property type="term" value="F:manganese ion binding"/>
    <property type="evidence" value="ECO:0007669"/>
    <property type="project" value="UniProtKB-UniRule"/>
</dbReference>
<dbReference type="GO" id="GO:0009098">
    <property type="term" value="P:L-leucine biosynthetic process"/>
    <property type="evidence" value="ECO:0007669"/>
    <property type="project" value="UniProtKB-UniRule"/>
</dbReference>
<dbReference type="CDD" id="cd07940">
    <property type="entry name" value="DRE_TIM_IPMS"/>
    <property type="match status" value="1"/>
</dbReference>
<dbReference type="FunFam" id="1.10.238.260:FF:000001">
    <property type="entry name" value="2-isopropylmalate synthase"/>
    <property type="match status" value="1"/>
</dbReference>
<dbReference type="FunFam" id="3.20.20.70:FF:000010">
    <property type="entry name" value="2-isopropylmalate synthase"/>
    <property type="match status" value="1"/>
</dbReference>
<dbReference type="FunFam" id="3.30.160.270:FF:000001">
    <property type="entry name" value="2-isopropylmalate synthase"/>
    <property type="match status" value="1"/>
</dbReference>
<dbReference type="Gene3D" id="1.10.238.260">
    <property type="match status" value="1"/>
</dbReference>
<dbReference type="Gene3D" id="3.30.160.270">
    <property type="match status" value="1"/>
</dbReference>
<dbReference type="Gene3D" id="3.20.20.70">
    <property type="entry name" value="Aldolase class I"/>
    <property type="match status" value="1"/>
</dbReference>
<dbReference type="HAMAP" id="MF_01025">
    <property type="entry name" value="LeuA_type1"/>
    <property type="match status" value="1"/>
</dbReference>
<dbReference type="InterPro" id="IPR050073">
    <property type="entry name" value="2-IPM_HCS-like"/>
</dbReference>
<dbReference type="InterPro" id="IPR013709">
    <property type="entry name" value="2-isopropylmalate_synth_dimer"/>
</dbReference>
<dbReference type="InterPro" id="IPR002034">
    <property type="entry name" value="AIPM/Hcit_synth_CS"/>
</dbReference>
<dbReference type="InterPro" id="IPR013785">
    <property type="entry name" value="Aldolase_TIM"/>
</dbReference>
<dbReference type="InterPro" id="IPR054691">
    <property type="entry name" value="LeuA/HCS_post-cat"/>
</dbReference>
<dbReference type="InterPro" id="IPR036230">
    <property type="entry name" value="LeuA_allosteric_dom_sf"/>
</dbReference>
<dbReference type="InterPro" id="IPR005671">
    <property type="entry name" value="LeuA_bact_synth"/>
</dbReference>
<dbReference type="InterPro" id="IPR000891">
    <property type="entry name" value="PYR_CT"/>
</dbReference>
<dbReference type="NCBIfam" id="TIGR00973">
    <property type="entry name" value="leuA_bact"/>
    <property type="match status" value="1"/>
</dbReference>
<dbReference type="NCBIfam" id="NF002084">
    <property type="entry name" value="PRK00915.1-1"/>
    <property type="match status" value="1"/>
</dbReference>
<dbReference type="NCBIfam" id="NF002086">
    <property type="entry name" value="PRK00915.1-3"/>
    <property type="match status" value="1"/>
</dbReference>
<dbReference type="PANTHER" id="PTHR10277:SF9">
    <property type="entry name" value="2-ISOPROPYLMALATE SYNTHASE 1, CHLOROPLASTIC-RELATED"/>
    <property type="match status" value="1"/>
</dbReference>
<dbReference type="PANTHER" id="PTHR10277">
    <property type="entry name" value="HOMOCITRATE SYNTHASE-RELATED"/>
    <property type="match status" value="1"/>
</dbReference>
<dbReference type="Pfam" id="PF22617">
    <property type="entry name" value="HCS_D2"/>
    <property type="match status" value="1"/>
</dbReference>
<dbReference type="Pfam" id="PF00682">
    <property type="entry name" value="HMGL-like"/>
    <property type="match status" value="1"/>
</dbReference>
<dbReference type="Pfam" id="PF08502">
    <property type="entry name" value="LeuA_dimer"/>
    <property type="match status" value="1"/>
</dbReference>
<dbReference type="SMART" id="SM00917">
    <property type="entry name" value="LeuA_dimer"/>
    <property type="match status" value="1"/>
</dbReference>
<dbReference type="SUPFAM" id="SSF110921">
    <property type="entry name" value="2-isopropylmalate synthase LeuA, allosteric (dimerisation) domain"/>
    <property type="match status" value="1"/>
</dbReference>
<dbReference type="SUPFAM" id="SSF51569">
    <property type="entry name" value="Aldolase"/>
    <property type="match status" value="1"/>
</dbReference>
<dbReference type="PROSITE" id="PS00815">
    <property type="entry name" value="AIPM_HOMOCIT_SYNTH_1"/>
    <property type="match status" value="1"/>
</dbReference>
<dbReference type="PROSITE" id="PS00816">
    <property type="entry name" value="AIPM_HOMOCIT_SYNTH_2"/>
    <property type="match status" value="1"/>
</dbReference>
<dbReference type="PROSITE" id="PS50991">
    <property type="entry name" value="PYR_CT"/>
    <property type="match status" value="1"/>
</dbReference>
<evidence type="ECO:0000255" key="1">
    <source>
        <dbReference type="HAMAP-Rule" id="MF_01025"/>
    </source>
</evidence>
<sequence length="518" mass="57221">MNSQVIIFDTTLRDGEQALQASLSVKQKLQIALSLENAGIDIIEVGFPISSPGDFKSVQTISKNIKNSRICSLARCLNKDIDTAAEAMSSSNTFRIHIFLATSTLHMESKLKKNFDQIIDMAISSVKRALRYTDDVEFSCEDASRTTMDNLCRIVEQLIKAGVKTINIPDTVGYTVPNELSTIIHNLFKRVPNIDQSIISVHCHNDLGMAVGNSISAIQAGARQIEGTINGIGERAGNTALEEVIMAIKVREDILGVSTNIKHKEIYRTSQIISQICNLPIPPNKAIVGSNAFAHSSGIHQDGVLKNRKNYEIMEPSSIGLKEVKLNLTSRSGRAAVKYYMTQMGYKECDYNIDELYTSFLKLADKKGQVFDYDLEALAFINMQQEESEYFSLSFFSVQSISNGLSTASVKLLCGKKVSIESATTSNGPIDAIYQALNRITNFPITLQKYQLVAKGKGRDALGQVDILVEYKKRKFHGVGLATDIIESSAQAMVNVLNNIWKANQVNEKLKTLKKVNN</sequence>
<feature type="chain" id="PRO_0000140335" description="2-isopropylmalate synthase">
    <location>
        <begin position="1"/>
        <end position="518"/>
    </location>
</feature>
<feature type="domain" description="Pyruvate carboxyltransferase" evidence="1">
    <location>
        <begin position="5"/>
        <end position="267"/>
    </location>
</feature>
<feature type="region of interest" description="Regulatory domain" evidence="1">
    <location>
        <begin position="392"/>
        <end position="518"/>
    </location>
</feature>
<feature type="binding site" evidence="1">
    <location>
        <position position="14"/>
    </location>
    <ligand>
        <name>Mn(2+)</name>
        <dbReference type="ChEBI" id="CHEBI:29035"/>
    </ligand>
</feature>
<feature type="binding site" evidence="1">
    <location>
        <position position="202"/>
    </location>
    <ligand>
        <name>Mn(2+)</name>
        <dbReference type="ChEBI" id="CHEBI:29035"/>
    </ligand>
</feature>
<feature type="binding site" evidence="1">
    <location>
        <position position="204"/>
    </location>
    <ligand>
        <name>Mn(2+)</name>
        <dbReference type="ChEBI" id="CHEBI:29035"/>
    </ligand>
</feature>
<feature type="binding site" evidence="1">
    <location>
        <position position="238"/>
    </location>
    <ligand>
        <name>Mn(2+)</name>
        <dbReference type="ChEBI" id="CHEBI:29035"/>
    </ligand>
</feature>
<keyword id="KW-0028">Amino-acid biosynthesis</keyword>
<keyword id="KW-0100">Branched-chain amino acid biosynthesis</keyword>
<keyword id="KW-0963">Cytoplasm</keyword>
<keyword id="KW-0432">Leucine biosynthesis</keyword>
<keyword id="KW-0464">Manganese</keyword>
<keyword id="KW-0479">Metal-binding</keyword>
<keyword id="KW-0614">Plasmid</keyword>
<keyword id="KW-0808">Transferase</keyword>
<protein>
    <recommendedName>
        <fullName evidence="1">2-isopropylmalate synthase</fullName>
        <ecNumber evidence="1">2.3.3.13</ecNumber>
    </recommendedName>
    <alternativeName>
        <fullName evidence="1">Alpha-IPM synthase</fullName>
    </alternativeName>
    <alternativeName>
        <fullName evidence="1">Alpha-isopropylmalate synthase</fullName>
    </alternativeName>
</protein>
<comment type="function">
    <text evidence="1">Catalyzes the condensation of the acetyl group of acetyl-CoA with 3-methyl-2-oxobutanoate (2-ketoisovalerate) to form 3-carboxy-3-hydroxy-4-methylpentanoate (2-isopropylmalate).</text>
</comment>
<comment type="catalytic activity">
    <reaction evidence="1">
        <text>3-methyl-2-oxobutanoate + acetyl-CoA + H2O = (2S)-2-isopropylmalate + CoA + H(+)</text>
        <dbReference type="Rhea" id="RHEA:21524"/>
        <dbReference type="ChEBI" id="CHEBI:1178"/>
        <dbReference type="ChEBI" id="CHEBI:11851"/>
        <dbReference type="ChEBI" id="CHEBI:15377"/>
        <dbReference type="ChEBI" id="CHEBI:15378"/>
        <dbReference type="ChEBI" id="CHEBI:57287"/>
        <dbReference type="ChEBI" id="CHEBI:57288"/>
        <dbReference type="EC" id="2.3.3.13"/>
    </reaction>
</comment>
<comment type="cofactor">
    <cofactor evidence="1">
        <name>Mn(2+)</name>
        <dbReference type="ChEBI" id="CHEBI:29035"/>
    </cofactor>
</comment>
<comment type="pathway">
    <text evidence="1">Amino-acid biosynthesis; L-leucine biosynthesis; L-leucine from 3-methyl-2-oxobutanoate: step 1/4.</text>
</comment>
<comment type="subunit">
    <text evidence="1">Homodimer.</text>
</comment>
<comment type="subcellular location">
    <subcellularLocation>
        <location evidence="1">Cytoplasm</location>
    </subcellularLocation>
</comment>
<comment type="similarity">
    <text evidence="1">Belongs to the alpha-IPM synthase/homocitrate synthase family. LeuA type 1 subfamily.</text>
</comment>
<gene>
    <name evidence="1" type="primary">leuA</name>
    <name type="ordered locus">BUsg_PL4</name>
</gene>
<accession>O85063</accession>
<accession>Q9R862</accession>
<geneLocation type="plasmid">
    <name>pLeu-Sg</name>
    <name>pBSg1</name>
</geneLocation>
<reference key="1">
    <citation type="journal article" date="1999" name="J. Mol. Evol.">
        <title>Genetic characterization of plasmids containing genes encoding enzymes of leucine biosynthesis in endosymbionts (Buchnera) of aphids.</title>
        <authorList>
            <person name="Baumann L."/>
            <person name="Baumann P."/>
            <person name="Moran N.A."/>
            <person name="Sandstroem J.P."/>
            <person name="Thao M.L."/>
        </authorList>
    </citation>
    <scope>NUCLEOTIDE SEQUENCE [LARGE SCALE GENOMIC DNA]</scope>
    <source>
        <strain>Sg</strain>
    </source>
</reference>
<reference key="2">
    <citation type="journal article" date="1998" name="FEMS Microbiol. Lett.">
        <title>Structure and evolution of the leucine plasmids carried by the endosymbiont (Buchnera aphidicola) from aphids of the family Aphididae.</title>
        <authorList>
            <person name="Silva F.J."/>
            <person name="van Ham R.C.H.J."/>
            <person name="Sabater B."/>
            <person name="Latorre A."/>
        </authorList>
    </citation>
    <scope>NUCLEOTIDE SEQUENCE [GENOMIC DNA] OF 1-13</scope>
</reference>
<organism>
    <name type="scientific">Buchnera aphidicola subsp. Schizaphis graminum (strain Sg)</name>
    <dbReference type="NCBI Taxonomy" id="198804"/>
    <lineage>
        <taxon>Bacteria</taxon>
        <taxon>Pseudomonadati</taxon>
        <taxon>Pseudomonadota</taxon>
        <taxon>Gammaproteobacteria</taxon>
        <taxon>Enterobacterales</taxon>
        <taxon>Erwiniaceae</taxon>
        <taxon>Buchnera</taxon>
    </lineage>
</organism>
<name>LEU1_BUCAP</name>